<evidence type="ECO:0000255" key="1">
    <source>
        <dbReference type="HAMAP-Rule" id="MF_01341"/>
    </source>
</evidence>
<evidence type="ECO:0000256" key="2">
    <source>
        <dbReference type="SAM" id="MobiDB-lite"/>
    </source>
</evidence>
<evidence type="ECO:0000305" key="3"/>
<proteinExistence type="inferred from homology"/>
<gene>
    <name evidence="1" type="primary">rplO</name>
    <name type="ordered locus">SGR_2815</name>
</gene>
<accession>B1W3Y8</accession>
<feature type="chain" id="PRO_1000142884" description="Large ribosomal subunit protein uL15">
    <location>
        <begin position="1"/>
        <end position="151"/>
    </location>
</feature>
<feature type="region of interest" description="Disordered" evidence="2">
    <location>
        <begin position="1"/>
        <end position="60"/>
    </location>
</feature>
<comment type="function">
    <text evidence="1">Binds to the 23S rRNA.</text>
</comment>
<comment type="subunit">
    <text evidence="1">Part of the 50S ribosomal subunit.</text>
</comment>
<comment type="similarity">
    <text evidence="1">Belongs to the universal ribosomal protein uL15 family.</text>
</comment>
<protein>
    <recommendedName>
        <fullName evidence="1">Large ribosomal subunit protein uL15</fullName>
    </recommendedName>
    <alternativeName>
        <fullName evidence="3">50S ribosomal protein L15</fullName>
    </alternativeName>
</protein>
<keyword id="KW-0687">Ribonucleoprotein</keyword>
<keyword id="KW-0689">Ribosomal protein</keyword>
<keyword id="KW-0694">RNA-binding</keyword>
<keyword id="KW-0699">rRNA-binding</keyword>
<organism>
    <name type="scientific">Streptomyces griseus subsp. griseus (strain JCM 4626 / CBS 651.72 / NBRC 13350 / KCC S-0626 / ISP 5235)</name>
    <dbReference type="NCBI Taxonomy" id="455632"/>
    <lineage>
        <taxon>Bacteria</taxon>
        <taxon>Bacillati</taxon>
        <taxon>Actinomycetota</taxon>
        <taxon>Actinomycetes</taxon>
        <taxon>Kitasatosporales</taxon>
        <taxon>Streptomycetaceae</taxon>
        <taxon>Streptomyces</taxon>
    </lineage>
</organism>
<dbReference type="EMBL" id="AP009493">
    <property type="protein sequence ID" value="BAG19644.1"/>
    <property type="molecule type" value="Genomic_DNA"/>
</dbReference>
<dbReference type="RefSeq" id="WP_003966942.1">
    <property type="nucleotide sequence ID" value="NC_010572.1"/>
</dbReference>
<dbReference type="SMR" id="B1W3Y8"/>
<dbReference type="GeneID" id="97760389"/>
<dbReference type="KEGG" id="sgr:SGR_2815"/>
<dbReference type="eggNOG" id="COG0200">
    <property type="taxonomic scope" value="Bacteria"/>
</dbReference>
<dbReference type="HOGENOM" id="CLU_055188_4_1_11"/>
<dbReference type="Proteomes" id="UP000001685">
    <property type="component" value="Chromosome"/>
</dbReference>
<dbReference type="GO" id="GO:0022625">
    <property type="term" value="C:cytosolic large ribosomal subunit"/>
    <property type="evidence" value="ECO:0007669"/>
    <property type="project" value="TreeGrafter"/>
</dbReference>
<dbReference type="GO" id="GO:0019843">
    <property type="term" value="F:rRNA binding"/>
    <property type="evidence" value="ECO:0007669"/>
    <property type="project" value="UniProtKB-UniRule"/>
</dbReference>
<dbReference type="GO" id="GO:0003735">
    <property type="term" value="F:structural constituent of ribosome"/>
    <property type="evidence" value="ECO:0007669"/>
    <property type="project" value="InterPro"/>
</dbReference>
<dbReference type="GO" id="GO:0006412">
    <property type="term" value="P:translation"/>
    <property type="evidence" value="ECO:0007669"/>
    <property type="project" value="UniProtKB-UniRule"/>
</dbReference>
<dbReference type="FunFam" id="3.100.10.10:FF:000005">
    <property type="entry name" value="50S ribosomal protein L15"/>
    <property type="match status" value="1"/>
</dbReference>
<dbReference type="Gene3D" id="3.100.10.10">
    <property type="match status" value="1"/>
</dbReference>
<dbReference type="HAMAP" id="MF_01341">
    <property type="entry name" value="Ribosomal_uL15"/>
    <property type="match status" value="1"/>
</dbReference>
<dbReference type="InterPro" id="IPR030878">
    <property type="entry name" value="Ribosomal_uL15"/>
</dbReference>
<dbReference type="InterPro" id="IPR021131">
    <property type="entry name" value="Ribosomal_uL15/eL18"/>
</dbReference>
<dbReference type="InterPro" id="IPR036227">
    <property type="entry name" value="Ribosomal_uL15/eL18_sf"/>
</dbReference>
<dbReference type="InterPro" id="IPR005749">
    <property type="entry name" value="Ribosomal_uL15_bac-type"/>
</dbReference>
<dbReference type="InterPro" id="IPR001196">
    <property type="entry name" value="Ribosomal_uL15_CS"/>
</dbReference>
<dbReference type="NCBIfam" id="TIGR01071">
    <property type="entry name" value="rplO_bact"/>
    <property type="match status" value="1"/>
</dbReference>
<dbReference type="PANTHER" id="PTHR12934">
    <property type="entry name" value="50S RIBOSOMAL PROTEIN L15"/>
    <property type="match status" value="1"/>
</dbReference>
<dbReference type="PANTHER" id="PTHR12934:SF11">
    <property type="entry name" value="LARGE RIBOSOMAL SUBUNIT PROTEIN UL15M"/>
    <property type="match status" value="1"/>
</dbReference>
<dbReference type="Pfam" id="PF00828">
    <property type="entry name" value="Ribosomal_L27A"/>
    <property type="match status" value="1"/>
</dbReference>
<dbReference type="SUPFAM" id="SSF52080">
    <property type="entry name" value="Ribosomal proteins L15p and L18e"/>
    <property type="match status" value="1"/>
</dbReference>
<dbReference type="PROSITE" id="PS00475">
    <property type="entry name" value="RIBOSOMAL_L15"/>
    <property type="match status" value="1"/>
</dbReference>
<reference key="1">
    <citation type="journal article" date="2008" name="J. Bacteriol.">
        <title>Genome sequence of the streptomycin-producing microorganism Streptomyces griseus IFO 13350.</title>
        <authorList>
            <person name="Ohnishi Y."/>
            <person name="Ishikawa J."/>
            <person name="Hara H."/>
            <person name="Suzuki H."/>
            <person name="Ikenoya M."/>
            <person name="Ikeda H."/>
            <person name="Yamashita A."/>
            <person name="Hattori M."/>
            <person name="Horinouchi S."/>
        </authorList>
    </citation>
    <scope>NUCLEOTIDE SEQUENCE [LARGE SCALE GENOMIC DNA]</scope>
    <source>
        <strain>JCM 4626 / CBS 651.72 / NBRC 13350 / KCC S-0626 / ISP 5235</strain>
    </source>
</reference>
<sequence length="151" mass="15974">MAENSPLKAHNLRPAPGAKTAKTRVGRGEASKGKTAGRGTKGTKARYQVPERFEGGQMPLHMRLPKLKGFKNPFRTEYQVVNLDKLATLYPEGGEVTVADLVAKGAVRNNHLVKVLGQGEISVALQVSVDAVSGSAKEKITAAGGTVTELV</sequence>
<name>RL15_STRGG</name>